<dbReference type="EC" id="3.2.2.-" evidence="1"/>
<dbReference type="EMBL" id="AM236080">
    <property type="protein sequence ID" value="CAK09272.1"/>
    <property type="molecule type" value="Genomic_DNA"/>
</dbReference>
<dbReference type="SMR" id="Q1MCQ8"/>
<dbReference type="EnsemblBacteria" id="CAK09272">
    <property type="protein sequence ID" value="CAK09272"/>
    <property type="gene ID" value="RL3782"/>
</dbReference>
<dbReference type="KEGG" id="rle:RL3782"/>
<dbReference type="eggNOG" id="COG2094">
    <property type="taxonomic scope" value="Bacteria"/>
</dbReference>
<dbReference type="HOGENOM" id="CLU_060471_4_1_5"/>
<dbReference type="Proteomes" id="UP000006575">
    <property type="component" value="Chromosome"/>
</dbReference>
<dbReference type="GO" id="GO:0003905">
    <property type="term" value="F:alkylbase DNA N-glycosylase activity"/>
    <property type="evidence" value="ECO:0007669"/>
    <property type="project" value="InterPro"/>
</dbReference>
<dbReference type="GO" id="GO:0003677">
    <property type="term" value="F:DNA binding"/>
    <property type="evidence" value="ECO:0007669"/>
    <property type="project" value="InterPro"/>
</dbReference>
<dbReference type="GO" id="GO:0006284">
    <property type="term" value="P:base-excision repair"/>
    <property type="evidence" value="ECO:0007669"/>
    <property type="project" value="InterPro"/>
</dbReference>
<dbReference type="CDD" id="cd00540">
    <property type="entry name" value="AAG"/>
    <property type="match status" value="1"/>
</dbReference>
<dbReference type="FunFam" id="3.10.300.10:FF:000001">
    <property type="entry name" value="Putative 3-methyladenine DNA glycosylase"/>
    <property type="match status" value="1"/>
</dbReference>
<dbReference type="Gene3D" id="3.10.300.10">
    <property type="entry name" value="Methylpurine-DNA glycosylase (MPG)"/>
    <property type="match status" value="1"/>
</dbReference>
<dbReference type="HAMAP" id="MF_00527">
    <property type="entry name" value="3MGH"/>
    <property type="match status" value="1"/>
</dbReference>
<dbReference type="InterPro" id="IPR011034">
    <property type="entry name" value="Formyl_transferase-like_C_sf"/>
</dbReference>
<dbReference type="InterPro" id="IPR003180">
    <property type="entry name" value="MPG"/>
</dbReference>
<dbReference type="InterPro" id="IPR036995">
    <property type="entry name" value="MPG_sf"/>
</dbReference>
<dbReference type="NCBIfam" id="TIGR00567">
    <property type="entry name" value="3mg"/>
    <property type="match status" value="1"/>
</dbReference>
<dbReference type="NCBIfam" id="NF002003">
    <property type="entry name" value="PRK00802.1-3"/>
    <property type="match status" value="1"/>
</dbReference>
<dbReference type="PANTHER" id="PTHR10429">
    <property type="entry name" value="DNA-3-METHYLADENINE GLYCOSYLASE"/>
    <property type="match status" value="1"/>
</dbReference>
<dbReference type="PANTHER" id="PTHR10429:SF0">
    <property type="entry name" value="DNA-3-METHYLADENINE GLYCOSYLASE"/>
    <property type="match status" value="1"/>
</dbReference>
<dbReference type="Pfam" id="PF02245">
    <property type="entry name" value="Pur_DNA_glyco"/>
    <property type="match status" value="1"/>
</dbReference>
<dbReference type="SUPFAM" id="SSF50486">
    <property type="entry name" value="FMT C-terminal domain-like"/>
    <property type="match status" value="1"/>
</dbReference>
<name>3MGH_RHIJ3</name>
<gene>
    <name type="ordered locus">RL3782</name>
</gene>
<feature type="chain" id="PRO_0000265047" description="Putative 3-methyladenine DNA glycosylase">
    <location>
        <begin position="1"/>
        <end position="198"/>
    </location>
</feature>
<proteinExistence type="inferred from homology"/>
<organism>
    <name type="scientific">Rhizobium johnstonii (strain DSM 114642 / LMG 32736 / 3841)</name>
    <name type="common">Rhizobium leguminosarum bv. viciae</name>
    <dbReference type="NCBI Taxonomy" id="216596"/>
    <lineage>
        <taxon>Bacteria</taxon>
        <taxon>Pseudomonadati</taxon>
        <taxon>Pseudomonadota</taxon>
        <taxon>Alphaproteobacteria</taxon>
        <taxon>Hyphomicrobiales</taxon>
        <taxon>Rhizobiaceae</taxon>
        <taxon>Rhizobium/Agrobacterium group</taxon>
        <taxon>Rhizobium</taxon>
        <taxon>Rhizobium johnstonii</taxon>
    </lineage>
</organism>
<keyword id="KW-0227">DNA damage</keyword>
<keyword id="KW-0234">DNA repair</keyword>
<keyword id="KW-0378">Hydrolase</keyword>
<reference key="1">
    <citation type="journal article" date="2006" name="Genome Biol.">
        <title>The genome of Rhizobium leguminosarum has recognizable core and accessory components.</title>
        <authorList>
            <person name="Young J.P.W."/>
            <person name="Crossman L.C."/>
            <person name="Johnston A.W.B."/>
            <person name="Thomson N.R."/>
            <person name="Ghazoui Z.F."/>
            <person name="Hull K.H."/>
            <person name="Wexler M."/>
            <person name="Curson A.R.J."/>
            <person name="Todd J.D."/>
            <person name="Poole P.S."/>
            <person name="Mauchline T.H."/>
            <person name="East A.K."/>
            <person name="Quail M.A."/>
            <person name="Churcher C."/>
            <person name="Arrowsmith C."/>
            <person name="Cherevach I."/>
            <person name="Chillingworth T."/>
            <person name="Clarke K."/>
            <person name="Cronin A."/>
            <person name="Davis P."/>
            <person name="Fraser A."/>
            <person name="Hance Z."/>
            <person name="Hauser H."/>
            <person name="Jagels K."/>
            <person name="Moule S."/>
            <person name="Mungall K."/>
            <person name="Norbertczak H."/>
            <person name="Rabbinowitsch E."/>
            <person name="Sanders M."/>
            <person name="Simmonds M."/>
            <person name="Whitehead S."/>
            <person name="Parkhill J."/>
        </authorList>
    </citation>
    <scope>NUCLEOTIDE SEQUENCE [LARGE SCALE GENOMIC DNA]</scope>
    <source>
        <strain>DSM 114642 / LMG 32736 / 3841</strain>
    </source>
</reference>
<comment type="similarity">
    <text evidence="1">Belongs to the DNA glycosylase MPG family.</text>
</comment>
<evidence type="ECO:0000255" key="1">
    <source>
        <dbReference type="HAMAP-Rule" id="MF_00527"/>
    </source>
</evidence>
<protein>
    <recommendedName>
        <fullName evidence="1">Putative 3-methyladenine DNA glycosylase</fullName>
        <ecNumber evidence="1">3.2.2.-</ecNumber>
    </recommendedName>
</protein>
<accession>Q1MCQ8</accession>
<sequence>MTDATTNGAIGAGTLTGESLRKFFERDAITVSRDLLGCHLTVDGVGGRITETEAYFPDDEASHSFRGPTKRNGAMYGKPGNVYIYRIYGVYWCLNFVCHPGSAALIRALEPETGIPRMMERRGTDMLTSLCSGPGKLCQALGIDIAINDRLLDRAPYAIAPSAPVPIVSGKRIGITKNAEAPWRFGIQGSRFLSKPFR</sequence>